<proteinExistence type="inferred from homology"/>
<gene>
    <name evidence="1" type="primary">rplM</name>
    <name type="ordered locus">YE3741</name>
</gene>
<accession>A1JR94</accession>
<sequence length="142" mass="15943">MKTFTAKPETVKRDWYVVDANGKTLGRLATELASRLRGKHKAEYTPHVDTGDYIIVLNAEKVAVTGNKRTDKIYYRHTGHIGGIKQATFEEMIARSPERVIEIAVKGMLPKGPLGRAMYRKLKVYAGTEHNHAAQQPQVLDI</sequence>
<keyword id="KW-0687">Ribonucleoprotein</keyword>
<keyword id="KW-0689">Ribosomal protein</keyword>
<dbReference type="EMBL" id="AM286415">
    <property type="protein sequence ID" value="CAL13767.1"/>
    <property type="molecule type" value="Genomic_DNA"/>
</dbReference>
<dbReference type="RefSeq" id="WP_004710905.1">
    <property type="nucleotide sequence ID" value="NC_008800.1"/>
</dbReference>
<dbReference type="RefSeq" id="YP_001007895.1">
    <property type="nucleotide sequence ID" value="NC_008800.1"/>
</dbReference>
<dbReference type="SMR" id="A1JR94"/>
<dbReference type="GeneID" id="97454432"/>
<dbReference type="KEGG" id="yen:YE3741"/>
<dbReference type="PATRIC" id="fig|393305.7.peg.3984"/>
<dbReference type="eggNOG" id="COG0102">
    <property type="taxonomic scope" value="Bacteria"/>
</dbReference>
<dbReference type="HOGENOM" id="CLU_082184_2_2_6"/>
<dbReference type="OrthoDB" id="9801330at2"/>
<dbReference type="Proteomes" id="UP000000642">
    <property type="component" value="Chromosome"/>
</dbReference>
<dbReference type="GO" id="GO:0022625">
    <property type="term" value="C:cytosolic large ribosomal subunit"/>
    <property type="evidence" value="ECO:0007669"/>
    <property type="project" value="TreeGrafter"/>
</dbReference>
<dbReference type="GO" id="GO:0003729">
    <property type="term" value="F:mRNA binding"/>
    <property type="evidence" value="ECO:0007669"/>
    <property type="project" value="TreeGrafter"/>
</dbReference>
<dbReference type="GO" id="GO:0003735">
    <property type="term" value="F:structural constituent of ribosome"/>
    <property type="evidence" value="ECO:0007669"/>
    <property type="project" value="InterPro"/>
</dbReference>
<dbReference type="GO" id="GO:0017148">
    <property type="term" value="P:negative regulation of translation"/>
    <property type="evidence" value="ECO:0007669"/>
    <property type="project" value="TreeGrafter"/>
</dbReference>
<dbReference type="GO" id="GO:0006412">
    <property type="term" value="P:translation"/>
    <property type="evidence" value="ECO:0007669"/>
    <property type="project" value="UniProtKB-UniRule"/>
</dbReference>
<dbReference type="CDD" id="cd00392">
    <property type="entry name" value="Ribosomal_L13"/>
    <property type="match status" value="1"/>
</dbReference>
<dbReference type="FunFam" id="3.90.1180.10:FF:000001">
    <property type="entry name" value="50S ribosomal protein L13"/>
    <property type="match status" value="1"/>
</dbReference>
<dbReference type="Gene3D" id="3.90.1180.10">
    <property type="entry name" value="Ribosomal protein L13"/>
    <property type="match status" value="1"/>
</dbReference>
<dbReference type="HAMAP" id="MF_01366">
    <property type="entry name" value="Ribosomal_uL13"/>
    <property type="match status" value="1"/>
</dbReference>
<dbReference type="InterPro" id="IPR005822">
    <property type="entry name" value="Ribosomal_uL13"/>
</dbReference>
<dbReference type="InterPro" id="IPR005823">
    <property type="entry name" value="Ribosomal_uL13_bac-type"/>
</dbReference>
<dbReference type="InterPro" id="IPR023563">
    <property type="entry name" value="Ribosomal_uL13_CS"/>
</dbReference>
<dbReference type="InterPro" id="IPR036899">
    <property type="entry name" value="Ribosomal_uL13_sf"/>
</dbReference>
<dbReference type="NCBIfam" id="TIGR01066">
    <property type="entry name" value="rplM_bact"/>
    <property type="match status" value="1"/>
</dbReference>
<dbReference type="PANTHER" id="PTHR11545:SF2">
    <property type="entry name" value="LARGE RIBOSOMAL SUBUNIT PROTEIN UL13M"/>
    <property type="match status" value="1"/>
</dbReference>
<dbReference type="PANTHER" id="PTHR11545">
    <property type="entry name" value="RIBOSOMAL PROTEIN L13"/>
    <property type="match status" value="1"/>
</dbReference>
<dbReference type="Pfam" id="PF00572">
    <property type="entry name" value="Ribosomal_L13"/>
    <property type="match status" value="1"/>
</dbReference>
<dbReference type="PIRSF" id="PIRSF002181">
    <property type="entry name" value="Ribosomal_L13"/>
    <property type="match status" value="1"/>
</dbReference>
<dbReference type="SUPFAM" id="SSF52161">
    <property type="entry name" value="Ribosomal protein L13"/>
    <property type="match status" value="1"/>
</dbReference>
<dbReference type="PROSITE" id="PS00783">
    <property type="entry name" value="RIBOSOMAL_L13"/>
    <property type="match status" value="1"/>
</dbReference>
<protein>
    <recommendedName>
        <fullName evidence="1">Large ribosomal subunit protein uL13</fullName>
    </recommendedName>
    <alternativeName>
        <fullName evidence="2">50S ribosomal protein L13</fullName>
    </alternativeName>
</protein>
<reference key="1">
    <citation type="journal article" date="2006" name="PLoS Genet.">
        <title>The complete genome sequence and comparative genome analysis of the high pathogenicity Yersinia enterocolitica strain 8081.</title>
        <authorList>
            <person name="Thomson N.R."/>
            <person name="Howard S."/>
            <person name="Wren B.W."/>
            <person name="Holden M.T.G."/>
            <person name="Crossman L."/>
            <person name="Challis G.L."/>
            <person name="Churcher C."/>
            <person name="Mungall K."/>
            <person name="Brooks K."/>
            <person name="Chillingworth T."/>
            <person name="Feltwell T."/>
            <person name="Abdellah Z."/>
            <person name="Hauser H."/>
            <person name="Jagels K."/>
            <person name="Maddison M."/>
            <person name="Moule S."/>
            <person name="Sanders M."/>
            <person name="Whitehead S."/>
            <person name="Quail M.A."/>
            <person name="Dougan G."/>
            <person name="Parkhill J."/>
            <person name="Prentice M.B."/>
        </authorList>
    </citation>
    <scope>NUCLEOTIDE SEQUENCE [LARGE SCALE GENOMIC DNA]</scope>
    <source>
        <strain>NCTC 13174 / 8081</strain>
    </source>
</reference>
<feature type="chain" id="PRO_1000055493" description="Large ribosomal subunit protein uL13">
    <location>
        <begin position="1"/>
        <end position="142"/>
    </location>
</feature>
<organism>
    <name type="scientific">Yersinia enterocolitica serotype O:8 / biotype 1B (strain NCTC 13174 / 8081)</name>
    <dbReference type="NCBI Taxonomy" id="393305"/>
    <lineage>
        <taxon>Bacteria</taxon>
        <taxon>Pseudomonadati</taxon>
        <taxon>Pseudomonadota</taxon>
        <taxon>Gammaproteobacteria</taxon>
        <taxon>Enterobacterales</taxon>
        <taxon>Yersiniaceae</taxon>
        <taxon>Yersinia</taxon>
    </lineage>
</organism>
<evidence type="ECO:0000255" key="1">
    <source>
        <dbReference type="HAMAP-Rule" id="MF_01366"/>
    </source>
</evidence>
<evidence type="ECO:0000305" key="2"/>
<name>RL13_YERE8</name>
<comment type="function">
    <text evidence="1">This protein is one of the early assembly proteins of the 50S ribosomal subunit, although it is not seen to bind rRNA by itself. It is important during the early stages of 50S assembly.</text>
</comment>
<comment type="subunit">
    <text evidence="1">Part of the 50S ribosomal subunit.</text>
</comment>
<comment type="similarity">
    <text evidence="1">Belongs to the universal ribosomal protein uL13 family.</text>
</comment>